<comment type="function">
    <text evidence="2 12">Multidomain scaffolding Mg(2+)-independent protein kinase that catalyzes the phosphotransfer from ATP to proteins such as NRXN1, and plays a role in synaptic transmembrane protein anchoring and ion channel trafficking (PubMed:18423203). Contributes to neural development and regulation of gene expression via interaction with the transcription factor TBR1. Binds to cell-surface proteins, including amyloid precursor protein, neurexins and syndecans. May mediate a link between the extracellular matrix and the actin cytoskeleton via its interaction with syndecan and with the actin/spectrin-binding protein 4.1. Component of the LIN-10-LIN-2-LIN-7 complex, which associates with the motor protein KIF17 to transport vesicles containing N-methyl-D-aspartate (NMDA) receptor subunit NR2B along microtubules (By similarity).</text>
</comment>
<comment type="catalytic activity">
    <reaction evidence="12">
        <text>L-seryl-[protein] + ATP = O-phospho-L-seryl-[protein] + ADP + H(+)</text>
        <dbReference type="Rhea" id="RHEA:17989"/>
        <dbReference type="Rhea" id="RHEA-COMP:9863"/>
        <dbReference type="Rhea" id="RHEA-COMP:11604"/>
        <dbReference type="ChEBI" id="CHEBI:15378"/>
        <dbReference type="ChEBI" id="CHEBI:29999"/>
        <dbReference type="ChEBI" id="CHEBI:30616"/>
        <dbReference type="ChEBI" id="CHEBI:83421"/>
        <dbReference type="ChEBI" id="CHEBI:456216"/>
        <dbReference type="EC" id="2.7.11.1"/>
    </reaction>
    <physiologicalReaction direction="left-to-right" evidence="12">
        <dbReference type="Rhea" id="RHEA:17990"/>
    </physiologicalReaction>
</comment>
<comment type="catalytic activity">
    <reaction>
        <text>L-threonyl-[protein] + ATP = O-phospho-L-threonyl-[protein] + ADP + H(+)</text>
        <dbReference type="Rhea" id="RHEA:46608"/>
        <dbReference type="Rhea" id="RHEA-COMP:11060"/>
        <dbReference type="Rhea" id="RHEA-COMP:11605"/>
        <dbReference type="ChEBI" id="CHEBI:15378"/>
        <dbReference type="ChEBI" id="CHEBI:30013"/>
        <dbReference type="ChEBI" id="CHEBI:30616"/>
        <dbReference type="ChEBI" id="CHEBI:61977"/>
        <dbReference type="ChEBI" id="CHEBI:456216"/>
        <dbReference type="EC" id="2.7.11.1"/>
    </reaction>
</comment>
<comment type="cofactor">
    <text evidence="12">Unlike other protein kinases, does not require a divalent cation such as magnesium for catalytic activity.</text>
</comment>
<comment type="activity regulation">
    <text evidence="12">Differs from archetypal CaMK members in that the kinase domain exhibits a constitutively active conformation and the autoinhibitory region does not engage in direct contact with the ATP-binding cleft, although it still binds Ca(2+)/CAM.</text>
</comment>
<comment type="biophysicochemical properties">
    <kinetics>
        <KM evidence="12">563 uM for ATP</KM>
        <KM evidence="12">748.7 uM for ATP (when NRXN1 is phosphorylated)</KM>
        <Vmax evidence="12">4.9 nmol/min/mmol enzyme</Vmax>
        <text>Kinetics of autophosphorylation assay were measured, rather than phosphorylation of an exogenous substrate.</text>
    </kinetics>
</comment>
<comment type="subunit">
    <text evidence="1 2 3 12 13 18">CASK and LIN7 form two mutually exclusive tripartite complexes with APBA1 or CASKIN1 (By similarity). Component of the brain-specific heterotrimeric complex (LIN-10-LIN-2-LIN-7 complex) composed of at least APBA1, CASK, and LIN7, which associates with the motor protein KIF17 to transport vesicles along microtubules (By similarity). Forms a heterotrimeric complex with DLG1 and LIN7B via their L27 domains (By similarity). Identified in a complex with ACTN4, IQGAP1, MAGI2, NPHS1, SPTAN1 and SPTBN1 (By similarity). Part of a complex containing CASK, TBR1 and TSPYL2 (By similarity). Interacts with WHRN (By similarity). Interacts (via the PDZ, SH3 and guanylate kinase-like domains) with NRXN1 (via C-terminus) (By similarity). Interacts with CASKIN1, APBA1, LIN7(A/B/C) and L27 domain of DLG1 and isoform 2 of DLG4 (By similarity). Interacts with FCHSD2 (By similarity). Interacts with KIRREL3 (PubMed:19012874). Interacts with TBR1 (By similarity). Interacts with TSPYL2 (By similarity).</text>
</comment>
<comment type="interaction">
    <interactant intactId="EBI-1215506">
        <id>O14936</id>
    </interactant>
    <interactant intactId="EBI-368690">
        <id>Q02410</id>
        <label>APBA1</label>
    </interactant>
    <organismsDiffer>false</organismsDiffer>
    <experiments>4</experiments>
</comment>
<comment type="interaction">
    <interactant intactId="EBI-1215506">
        <id>O14936</id>
    </interactant>
    <interactant intactId="EBI-727707">
        <id>P25054</id>
        <label>APC</label>
    </interactant>
    <organismsDiffer>false</organismsDiffer>
    <experiments>2</experiments>
</comment>
<comment type="interaction">
    <interactant intactId="EBI-1215506">
        <id>O14936</id>
    </interactant>
    <interactant intactId="EBI-970261">
        <id>Q8WXD9</id>
        <label>CASKIN1</label>
    </interactant>
    <organismsDiffer>false</organismsDiffer>
    <experiments>4</experiments>
</comment>
<comment type="interaction">
    <interactant intactId="EBI-1215506">
        <id>O14936</id>
    </interactant>
    <interactant intactId="EBI-349854">
        <id>P13569</id>
        <label>CFTR</label>
    </interactant>
    <organismsDiffer>false</organismsDiffer>
    <experiments>4</experiments>
</comment>
<comment type="interaction">
    <interactant intactId="EBI-1215506">
        <id>O14936</id>
    </interactant>
    <interactant intactId="EBI-375576">
        <id>Q12929</id>
        <label>EPS8</label>
    </interactant>
    <organismsDiffer>false</organismsDiffer>
    <experiments>3</experiments>
</comment>
<comment type="interaction">
    <interactant intactId="EBI-1215506">
        <id>O14936</id>
    </interactant>
    <interactant intactId="EBI-1215527">
        <id>P41134</id>
        <label>ID1</label>
    </interactant>
    <organismsDiffer>false</organismsDiffer>
    <experiments>3</experiments>
</comment>
<comment type="interaction">
    <interactant intactId="EBI-1215506">
        <id>O14936</id>
    </interactant>
    <interactant intactId="EBI-2513988">
        <id>O14910</id>
        <label>LIN7A</label>
    </interactant>
    <organismsDiffer>false</organismsDiffer>
    <experiments>7</experiments>
</comment>
<comment type="interaction">
    <interactant intactId="EBI-1215506">
        <id>O14936</id>
    </interactant>
    <interactant intactId="EBI-1216802">
        <id>Q9Y2J0</id>
        <label>RPH3A</label>
    </interactant>
    <organismsDiffer>false</organismsDiffer>
    <experiments>3</experiments>
</comment>
<comment type="interaction">
    <interactant intactId="EBI-1215506">
        <id>O14936</id>
    </interactant>
    <interactant intactId="EBI-1172957">
        <id>P34741</id>
        <label>SDC2</label>
    </interactant>
    <organismsDiffer>false</organismsDiffer>
    <experiments>2</experiments>
</comment>
<comment type="interaction">
    <interactant intactId="EBI-1215506">
        <id>O14936</id>
    </interactant>
    <interactant intactId="EBI-747035">
        <id>Q9H788</id>
        <label>SH2D4A</label>
    </interactant>
    <organismsDiffer>false</organismsDiffer>
    <experiments>4</experiments>
</comment>
<comment type="interaction">
    <interactant intactId="EBI-1215506">
        <id>O14936</id>
    </interactant>
    <interactant intactId="EBI-80411">
        <id>Q13425</id>
        <label>SNTB2</label>
    </interactant>
    <organismsDiffer>false</organismsDiffer>
    <experiments>6</experiments>
</comment>
<comment type="interaction">
    <interactant intactId="EBI-1215506">
        <id>O14936</id>
    </interactant>
    <interactant intactId="EBI-1050007">
        <id>Q13009</id>
        <label>TIAM1</label>
    </interactant>
    <organismsDiffer>false</organismsDiffer>
    <experiments>3</experiments>
</comment>
<comment type="interaction">
    <interactant intactId="EBI-1215506">
        <id>O14936</id>
    </interactant>
    <interactant intactId="EBI-1780696">
        <id>Q63373</id>
        <label>Nrxn1</label>
    </interactant>
    <organismsDiffer>true</organismsDiffer>
    <experiments>3</experiments>
</comment>
<comment type="interaction">
    <interactant intactId="EBI-15957318">
        <id>O14936-2</id>
    </interactant>
    <interactant intactId="EBI-970261">
        <id>Q8WXD9</id>
        <label>CASKIN1</label>
    </interactant>
    <organismsDiffer>false</organismsDiffer>
    <experiments>2</experiments>
</comment>
<comment type="interaction">
    <interactant intactId="EBI-12007726">
        <id>O14936-4</id>
    </interactant>
    <interactant intactId="EBI-12155483">
        <id>Q9H1P6</id>
        <label>CIMIP1</label>
    </interactant>
    <organismsDiffer>false</organismsDiffer>
    <experiments>3</experiments>
</comment>
<comment type="interaction">
    <interactant intactId="EBI-12007726">
        <id>O14936-4</id>
    </interactant>
    <interactant intactId="EBI-2513988">
        <id>O14910</id>
        <label>LIN7A</label>
    </interactant>
    <organismsDiffer>false</organismsDiffer>
    <experiments>3</experiments>
</comment>
<comment type="interaction">
    <interactant intactId="EBI-12007726">
        <id>O14936-4</id>
    </interactant>
    <interactant intactId="EBI-821335">
        <id>Q9HAP6</id>
        <label>LIN7B</label>
    </interactant>
    <organismsDiffer>false</organismsDiffer>
    <experiments>3</experiments>
</comment>
<comment type="interaction">
    <interactant intactId="EBI-12007726">
        <id>O14936-4</id>
    </interactant>
    <interactant intactId="EBI-8852072">
        <id>Q9UH92-3</id>
        <label>MLX</label>
    </interactant>
    <organismsDiffer>false</organismsDiffer>
    <experiments>3</experiments>
</comment>
<comment type="interaction">
    <interactant intactId="EBI-12007726">
        <id>O14936-4</id>
    </interactant>
    <interactant intactId="EBI-743459">
        <id>Q9HB63</id>
        <label>NTN4</label>
    </interactant>
    <organismsDiffer>false</organismsDiffer>
    <experiments>3</experiments>
</comment>
<comment type="interaction">
    <interactant intactId="EBI-12007726">
        <id>O14936-4</id>
    </interactant>
    <interactant intactId="EBI-747035">
        <id>Q9H788</id>
        <label>SH2D4A</label>
    </interactant>
    <organismsDiffer>false</organismsDiffer>
    <experiments>3</experiments>
</comment>
<comment type="subcellular location">
    <subcellularLocation>
        <location evidence="3">Nucleus</location>
    </subcellularLocation>
    <subcellularLocation>
        <location evidence="3">Cytoplasm</location>
    </subcellularLocation>
    <subcellularLocation>
        <location evidence="3">Cell membrane</location>
        <topology evidence="3">Peripheral membrane protein</topology>
    </subcellularLocation>
</comment>
<comment type="alternative products">
    <event type="alternative splicing"/>
    <isoform>
        <id>O14936-1</id>
        <name>1</name>
        <sequence type="displayed"/>
    </isoform>
    <isoform>
        <id>O14936-2</id>
        <name>2</name>
        <sequence type="described" ref="VSP_024426"/>
    </isoform>
    <isoform>
        <id>O14936-3</id>
        <name>3</name>
        <sequence type="described" ref="VSP_024422 VSP_024424"/>
    </isoform>
    <isoform>
        <id>O14936-4</id>
        <name>4</name>
        <sequence type="described" ref="VSP_024424 VSP_024426"/>
    </isoform>
    <isoform>
        <id>O14936-5</id>
        <name>5</name>
        <sequence type="described" ref="VSP_024421 VSP_024423 VSP_024424"/>
    </isoform>
    <isoform>
        <id>O14936-6</id>
        <name>6</name>
        <sequence type="described" ref="VSP_024425 VSP_024426"/>
    </isoform>
</comment>
<comment type="tissue specificity">
    <text evidence="10">Ubiquitous. Expression is significantly greater in brain relative to kidney, lung, and liver and in fetal brain and kidney relative to lung and liver.</text>
</comment>
<comment type="domain">
    <text evidence="1">The first L27 domain binds DLG1 and the second L27 domain probably binds LIN7.</text>
</comment>
<comment type="domain">
    <text>The protein kinase domain mediates the interaction with FCHSD2.</text>
</comment>
<comment type="disease" evidence="14 16">
    <disease id="DI-00709">
        <name>Intellectual developmental disorder with microcephaly and pontine and cerebellar hypoplasia</name>
        <acronym>MICPCH</acronym>
        <description>A disorder characterized by significantly below average general intellectual functioning associated with impairments in adaptive behavior and manifested during the developmental period. Affected individuals can manifest a severe phenotype consisting of severe intellectual deficit, congenital or postnatal microcephaly, disproportionate brainstem and cerebellar hypoplasia. A milder phenotype consists of intellectual disability alone or associated with nystagmus.</description>
        <dbReference type="MIM" id="300749"/>
    </disease>
    <text>The disease is caused by variants affecting the gene represented in this entry.</text>
</comment>
<comment type="disease" evidence="15">
    <disease id="DI-01617">
        <name>FG syndrome 4</name>
        <acronym>FGS4</acronym>
        <description>FG syndrome (FGS) is an X-linked disorder characterized by intellectual disability, relative macrocephaly, hypotonia and constipation.</description>
        <dbReference type="MIM" id="300422"/>
    </disease>
    <text>The disease is caused by variants affecting the gene represented in this entry.</text>
</comment>
<comment type="similarity">
    <text evidence="26">In the N-terminal section; belongs to the protein kinase superfamily. CAMK Ser/Thr protein kinase family. CaMK subfamily.</text>
</comment>
<comment type="similarity">
    <text evidence="26">Belongs to the MAGUK family.</text>
</comment>
<reference key="1">
    <citation type="journal article" date="1998" name="J. Cell Biol.">
        <title>Human CASK/LIN-2 binds syndecan-2 and protein 4.1 and localizes to the basolateral membrane of epithelial cells.</title>
        <authorList>
            <person name="Cohen A.R."/>
            <person name="Woods D.F."/>
            <person name="Marfatia S.M."/>
            <person name="Walther Z."/>
            <person name="Chishti A.H."/>
            <person name="Anderson J.M."/>
        </authorList>
    </citation>
    <scope>NUCLEOTIDE SEQUENCE [MRNA] (ISOFORM 2)</scope>
    <scope>INTERACTION WITH SDC2 AND EPB41</scope>
    <source>
        <tissue>Brain</tissue>
        <tissue>Liver</tissue>
        <tissue>Lung</tissue>
    </source>
</reference>
<reference key="2">
    <citation type="submission" date="1997-11" db="EMBL/GenBank/DDBJ databases">
        <title>The human homolog of the rat CASK, Drosophila Camguk and C.elegans Lin-2 genes.</title>
        <authorList>
            <person name="Zha D."/>
            <person name="Hu G."/>
        </authorList>
    </citation>
    <scope>NUCLEOTIDE SEQUENCE [MRNA] (ISOFORM 3)</scope>
</reference>
<reference key="3">
    <citation type="submission" date="2000-02" db="EMBL/GenBank/DDBJ databases">
        <title>Putative alternative splicing form of human CASK mRNA (partial codes).</title>
        <authorList>
            <person name="Ding L."/>
            <person name="Saijo K."/>
            <person name="Kawai K."/>
            <person name="Akaza H."/>
            <person name="Ugai H."/>
            <person name="Yokoyama K.K."/>
            <person name="Ohno T."/>
        </authorList>
    </citation>
    <scope>NUCLEOTIDE SEQUENCE [MRNA] (ISOFORM 5)</scope>
    <source>
        <tissue>Kidney</tissue>
    </source>
</reference>
<reference key="4">
    <citation type="submission" date="2004-08" db="EMBL/GenBank/DDBJ databases">
        <title>Caco2-BBE calcium/calmodulin-dependent serine protein kinase.</title>
        <authorList>
            <person name="Yan Y."/>
            <person name="Merlin D."/>
        </authorList>
    </citation>
    <scope>NUCLEOTIDE SEQUENCE [MRNA] (ISOFORM 2)</scope>
    <source>
        <tissue>Colon carcinoma</tissue>
    </source>
</reference>
<reference key="5">
    <citation type="journal article" date="2005" name="Nature">
        <title>The DNA sequence of the human X chromosome.</title>
        <authorList>
            <person name="Ross M.T."/>
            <person name="Grafham D.V."/>
            <person name="Coffey A.J."/>
            <person name="Scherer S."/>
            <person name="McLay K."/>
            <person name="Muzny D."/>
            <person name="Platzer M."/>
            <person name="Howell G.R."/>
            <person name="Burrows C."/>
            <person name="Bird C.P."/>
            <person name="Frankish A."/>
            <person name="Lovell F.L."/>
            <person name="Howe K.L."/>
            <person name="Ashurst J.L."/>
            <person name="Fulton R.S."/>
            <person name="Sudbrak R."/>
            <person name="Wen G."/>
            <person name="Jones M.C."/>
            <person name="Hurles M.E."/>
            <person name="Andrews T.D."/>
            <person name="Scott C.E."/>
            <person name="Searle S."/>
            <person name="Ramser J."/>
            <person name="Whittaker A."/>
            <person name="Deadman R."/>
            <person name="Carter N.P."/>
            <person name="Hunt S.E."/>
            <person name="Chen R."/>
            <person name="Cree A."/>
            <person name="Gunaratne P."/>
            <person name="Havlak P."/>
            <person name="Hodgson A."/>
            <person name="Metzker M.L."/>
            <person name="Richards S."/>
            <person name="Scott G."/>
            <person name="Steffen D."/>
            <person name="Sodergren E."/>
            <person name="Wheeler D.A."/>
            <person name="Worley K.C."/>
            <person name="Ainscough R."/>
            <person name="Ambrose K.D."/>
            <person name="Ansari-Lari M.A."/>
            <person name="Aradhya S."/>
            <person name="Ashwell R.I."/>
            <person name="Babbage A.K."/>
            <person name="Bagguley C.L."/>
            <person name="Ballabio A."/>
            <person name="Banerjee R."/>
            <person name="Barker G.E."/>
            <person name="Barlow K.F."/>
            <person name="Barrett I.P."/>
            <person name="Bates K.N."/>
            <person name="Beare D.M."/>
            <person name="Beasley H."/>
            <person name="Beasley O."/>
            <person name="Beck A."/>
            <person name="Bethel G."/>
            <person name="Blechschmidt K."/>
            <person name="Brady N."/>
            <person name="Bray-Allen S."/>
            <person name="Bridgeman A.M."/>
            <person name="Brown A.J."/>
            <person name="Brown M.J."/>
            <person name="Bonnin D."/>
            <person name="Bruford E.A."/>
            <person name="Buhay C."/>
            <person name="Burch P."/>
            <person name="Burford D."/>
            <person name="Burgess J."/>
            <person name="Burrill W."/>
            <person name="Burton J."/>
            <person name="Bye J.M."/>
            <person name="Carder C."/>
            <person name="Carrel L."/>
            <person name="Chako J."/>
            <person name="Chapman J.C."/>
            <person name="Chavez D."/>
            <person name="Chen E."/>
            <person name="Chen G."/>
            <person name="Chen Y."/>
            <person name="Chen Z."/>
            <person name="Chinault C."/>
            <person name="Ciccodicola A."/>
            <person name="Clark S.Y."/>
            <person name="Clarke G."/>
            <person name="Clee C.M."/>
            <person name="Clegg S."/>
            <person name="Clerc-Blankenburg K."/>
            <person name="Clifford K."/>
            <person name="Cobley V."/>
            <person name="Cole C.G."/>
            <person name="Conquer J.S."/>
            <person name="Corby N."/>
            <person name="Connor R.E."/>
            <person name="David R."/>
            <person name="Davies J."/>
            <person name="Davis C."/>
            <person name="Davis J."/>
            <person name="Delgado O."/>
            <person name="Deshazo D."/>
            <person name="Dhami P."/>
            <person name="Ding Y."/>
            <person name="Dinh H."/>
            <person name="Dodsworth S."/>
            <person name="Draper H."/>
            <person name="Dugan-Rocha S."/>
            <person name="Dunham A."/>
            <person name="Dunn M."/>
            <person name="Durbin K.J."/>
            <person name="Dutta I."/>
            <person name="Eades T."/>
            <person name="Ellwood M."/>
            <person name="Emery-Cohen A."/>
            <person name="Errington H."/>
            <person name="Evans K.L."/>
            <person name="Faulkner L."/>
            <person name="Francis F."/>
            <person name="Frankland J."/>
            <person name="Fraser A.E."/>
            <person name="Galgoczy P."/>
            <person name="Gilbert J."/>
            <person name="Gill R."/>
            <person name="Gloeckner G."/>
            <person name="Gregory S.G."/>
            <person name="Gribble S."/>
            <person name="Griffiths C."/>
            <person name="Grocock R."/>
            <person name="Gu Y."/>
            <person name="Gwilliam R."/>
            <person name="Hamilton C."/>
            <person name="Hart E.A."/>
            <person name="Hawes A."/>
            <person name="Heath P.D."/>
            <person name="Heitmann K."/>
            <person name="Hennig S."/>
            <person name="Hernandez J."/>
            <person name="Hinzmann B."/>
            <person name="Ho S."/>
            <person name="Hoffs M."/>
            <person name="Howden P.J."/>
            <person name="Huckle E.J."/>
            <person name="Hume J."/>
            <person name="Hunt P.J."/>
            <person name="Hunt A.R."/>
            <person name="Isherwood J."/>
            <person name="Jacob L."/>
            <person name="Johnson D."/>
            <person name="Jones S."/>
            <person name="de Jong P.J."/>
            <person name="Joseph S.S."/>
            <person name="Keenan S."/>
            <person name="Kelly S."/>
            <person name="Kershaw J.K."/>
            <person name="Khan Z."/>
            <person name="Kioschis P."/>
            <person name="Klages S."/>
            <person name="Knights A.J."/>
            <person name="Kosiura A."/>
            <person name="Kovar-Smith C."/>
            <person name="Laird G.K."/>
            <person name="Langford C."/>
            <person name="Lawlor S."/>
            <person name="Leversha M."/>
            <person name="Lewis L."/>
            <person name="Liu W."/>
            <person name="Lloyd C."/>
            <person name="Lloyd D.M."/>
            <person name="Loulseged H."/>
            <person name="Loveland J.E."/>
            <person name="Lovell J.D."/>
            <person name="Lozado R."/>
            <person name="Lu J."/>
            <person name="Lyne R."/>
            <person name="Ma J."/>
            <person name="Maheshwari M."/>
            <person name="Matthews L.H."/>
            <person name="McDowall J."/>
            <person name="McLaren S."/>
            <person name="McMurray A."/>
            <person name="Meidl P."/>
            <person name="Meitinger T."/>
            <person name="Milne S."/>
            <person name="Miner G."/>
            <person name="Mistry S.L."/>
            <person name="Morgan M."/>
            <person name="Morris S."/>
            <person name="Mueller I."/>
            <person name="Mullikin J.C."/>
            <person name="Nguyen N."/>
            <person name="Nordsiek G."/>
            <person name="Nyakatura G."/>
            <person name="O'dell C.N."/>
            <person name="Okwuonu G."/>
            <person name="Palmer S."/>
            <person name="Pandian R."/>
            <person name="Parker D."/>
            <person name="Parrish J."/>
            <person name="Pasternak S."/>
            <person name="Patel D."/>
            <person name="Pearce A.V."/>
            <person name="Pearson D.M."/>
            <person name="Pelan S.E."/>
            <person name="Perez L."/>
            <person name="Porter K.M."/>
            <person name="Ramsey Y."/>
            <person name="Reichwald K."/>
            <person name="Rhodes S."/>
            <person name="Ridler K.A."/>
            <person name="Schlessinger D."/>
            <person name="Schueler M.G."/>
            <person name="Sehra H.K."/>
            <person name="Shaw-Smith C."/>
            <person name="Shen H."/>
            <person name="Sheridan E.M."/>
            <person name="Shownkeen R."/>
            <person name="Skuce C.D."/>
            <person name="Smith M.L."/>
            <person name="Sotheran E.C."/>
            <person name="Steingruber H.E."/>
            <person name="Steward C.A."/>
            <person name="Storey R."/>
            <person name="Swann R.M."/>
            <person name="Swarbreck D."/>
            <person name="Tabor P.E."/>
            <person name="Taudien S."/>
            <person name="Taylor T."/>
            <person name="Teague B."/>
            <person name="Thomas K."/>
            <person name="Thorpe A."/>
            <person name="Timms K."/>
            <person name="Tracey A."/>
            <person name="Trevanion S."/>
            <person name="Tromans A.C."/>
            <person name="d'Urso M."/>
            <person name="Verduzco D."/>
            <person name="Villasana D."/>
            <person name="Waldron L."/>
            <person name="Wall M."/>
            <person name="Wang Q."/>
            <person name="Warren J."/>
            <person name="Warry G.L."/>
            <person name="Wei X."/>
            <person name="West A."/>
            <person name="Whitehead S.L."/>
            <person name="Whiteley M.N."/>
            <person name="Wilkinson J.E."/>
            <person name="Willey D.L."/>
            <person name="Williams G."/>
            <person name="Williams L."/>
            <person name="Williamson A."/>
            <person name="Williamson H."/>
            <person name="Wilming L."/>
            <person name="Woodmansey R.L."/>
            <person name="Wray P.W."/>
            <person name="Yen J."/>
            <person name="Zhang J."/>
            <person name="Zhou J."/>
            <person name="Zoghbi H."/>
            <person name="Zorilla S."/>
            <person name="Buck D."/>
            <person name="Reinhardt R."/>
            <person name="Poustka A."/>
            <person name="Rosenthal A."/>
            <person name="Lehrach H."/>
            <person name="Meindl A."/>
            <person name="Minx P.J."/>
            <person name="Hillier L.W."/>
            <person name="Willard H.F."/>
            <person name="Wilson R.K."/>
            <person name="Waterston R.H."/>
            <person name="Rice C.M."/>
            <person name="Vaudin M."/>
            <person name="Coulson A."/>
            <person name="Nelson D.L."/>
            <person name="Weinstock G."/>
            <person name="Sulston J.E."/>
            <person name="Durbin R.M."/>
            <person name="Hubbard T."/>
            <person name="Gibbs R.A."/>
            <person name="Beck S."/>
            <person name="Rogers J."/>
            <person name="Bentley D.R."/>
        </authorList>
    </citation>
    <scope>NUCLEOTIDE SEQUENCE [LARGE SCALE GENOMIC DNA]</scope>
</reference>
<reference key="6">
    <citation type="journal article" date="2004" name="Genome Res.">
        <title>The status, quality, and expansion of the NIH full-length cDNA project: the Mammalian Gene Collection (MGC).</title>
        <authorList>
            <consortium name="The MGC Project Team"/>
        </authorList>
    </citation>
    <scope>NUCLEOTIDE SEQUENCE [LARGE SCALE MRNA] (ISOFORM 4)</scope>
    <source>
        <tissue>Brain</tissue>
    </source>
</reference>
<reference key="7">
    <citation type="submission" date="2005-03" db="EMBL/GenBank/DDBJ databases">
        <authorList>
            <person name="Totoki Y."/>
            <person name="Toyoda A."/>
            <person name="Takeda T."/>
            <person name="Sakaki Y."/>
            <person name="Tanaka A."/>
            <person name="Yokoyama S."/>
            <person name="Ohara O."/>
            <person name="Nagase T."/>
            <person name="Kikuno R.F."/>
        </authorList>
    </citation>
    <scope>NUCLEOTIDE SEQUENCE [LARGE SCALE MRNA] OF 5-926 (ISOFORM 2)</scope>
    <source>
        <tissue>Brain</tissue>
    </source>
</reference>
<reference key="8">
    <citation type="journal article" date="2000" name="Mamm. Genome">
        <title>Mapping and expression analysis of the human CASK gene.</title>
        <authorList>
            <person name="Stevenson D."/>
            <person name="Laverty H.G."/>
            <person name="Wenwieser S."/>
            <person name="Douglas M."/>
            <person name="Wilson J.B."/>
        </authorList>
    </citation>
    <scope>NUCLEOTIDE SEQUENCE [MRNA] OF 173-926 (ISOFORM 1)</scope>
    <scope>NUCLEOTIDE SEQUENCE [MRNA] OF 27-926 (ISOFORM 3)</scope>
    <scope>TISSUE SPECIFICITY</scope>
    <source>
        <tissue>Fetus</tissue>
    </source>
</reference>
<reference key="9">
    <citation type="journal article" date="2008" name="Am. J. Hum. Genet.">
        <title>Alterations in CDH15 and KIRREL3 in patients with mild to severe intellectual disability.</title>
        <authorList>
            <person name="Bhalla K."/>
            <person name="Luo Y."/>
            <person name="Buchan T."/>
            <person name="Beachem M.A."/>
            <person name="Guzauskas G.F."/>
            <person name="Ladd S."/>
            <person name="Bratcher S.J."/>
            <person name="Schroer R.J."/>
            <person name="Balsamo J."/>
            <person name="DuPont B.R."/>
            <person name="Lilien J."/>
            <person name="Srivastava A.K."/>
        </authorList>
    </citation>
    <scope>INTERACTION WITH KIRREL3</scope>
</reference>
<reference key="10">
    <citation type="journal article" date="2013" name="J. Proteome Res.">
        <title>Toward a comprehensive characterization of a human cancer cell phosphoproteome.</title>
        <authorList>
            <person name="Zhou H."/>
            <person name="Di Palma S."/>
            <person name="Preisinger C."/>
            <person name="Peng M."/>
            <person name="Polat A.N."/>
            <person name="Heck A.J."/>
            <person name="Mohammed S."/>
        </authorList>
    </citation>
    <scope>PHOSPHORYLATION [LARGE SCALE ANALYSIS] AT SER-51</scope>
    <scope>IDENTIFICATION BY MASS SPECTROMETRY [LARGE SCALE ANALYSIS]</scope>
    <source>
        <tissue>Cervix carcinoma</tissue>
    </source>
</reference>
<reference key="11">
    <citation type="journal article" date="2014" name="J. Proteomics">
        <title>An enzyme assisted RP-RPLC approach for in-depth analysis of human liver phosphoproteome.</title>
        <authorList>
            <person name="Bian Y."/>
            <person name="Song C."/>
            <person name="Cheng K."/>
            <person name="Dong M."/>
            <person name="Wang F."/>
            <person name="Huang J."/>
            <person name="Sun D."/>
            <person name="Wang L."/>
            <person name="Ye M."/>
            <person name="Zou H."/>
        </authorList>
    </citation>
    <scope>PHOSPHORYLATION [LARGE SCALE ANALYSIS] AT SER-313</scope>
    <scope>PHOSPHORYLATION [LARGE SCALE ANALYSIS] AT SER-571 (ISOFORM 3)</scope>
    <scope>PHOSPHORYLATION [LARGE SCALE ANALYSIS] AT SER-577 (ISOFORM 4)</scope>
    <scope>PHOSPHORYLATION [LARGE SCALE ANALYSIS] AT SER-192 (ISOFORM 5)</scope>
    <scope>IDENTIFICATION BY MASS SPECTROMETRY [LARGE SCALE ANALYSIS]</scope>
    <source>
        <tissue>Liver</tissue>
    </source>
</reference>
<reference key="12">
    <citation type="journal article" date="1998" name="Nat. Struct. Biol.">
        <title>Crystal structure of the hCASK PDZ domain reveals the structural basis of class II PDZ domain target recognition.</title>
        <authorList>
            <person name="Daniels D.L."/>
            <person name="Cohen A.R."/>
            <person name="Anderson J.M."/>
            <person name="Bruenger A.T."/>
        </authorList>
    </citation>
    <scope>X-RAY CRYSTALLOGRAPHY (1.9 ANGSTROMS) OF 489-572</scope>
</reference>
<reference key="13">
    <citation type="journal article" date="2008" name="Cell">
        <title>CASK functions as a Mg2+-independent neurexin kinase.</title>
        <authorList>
            <person name="Mukherjee K."/>
            <person name="Sharma M."/>
            <person name="Urlaub H."/>
            <person name="Bourenkov G.P."/>
            <person name="Jahn R."/>
            <person name="Suedhof T.C."/>
            <person name="Wahl M.C."/>
        </authorList>
    </citation>
    <scope>X-RAY CRYSTALLOGRAPHY (1.85 ANGSTROMS) OF 1-337 IN COMPLEX WITH AMP</scope>
    <scope>CATALYTIC ACTIVITY</scope>
    <scope>COFACTOR</scope>
    <scope>ACTIVITY REGULATION</scope>
    <scope>BIOPHYSICOCHEMICAL PROPERTIES</scope>
    <scope>PHOSPHORYLATION OF NRXN1</scope>
    <scope>PHOSPHORYLATION AT SER-151 AND SER-155</scope>
</reference>
<reference key="14">
    <citation type="journal article" date="2007" name="Nature">
        <title>Patterns of somatic mutation in human cancer genomes.</title>
        <authorList>
            <person name="Greenman C."/>
            <person name="Stephens P."/>
            <person name="Smith R."/>
            <person name="Dalgliesh G.L."/>
            <person name="Hunter C."/>
            <person name="Bignell G."/>
            <person name="Davies H."/>
            <person name="Teague J."/>
            <person name="Butler A."/>
            <person name="Stevens C."/>
            <person name="Edkins S."/>
            <person name="O'Meara S."/>
            <person name="Vastrik I."/>
            <person name="Schmidt E.E."/>
            <person name="Avis T."/>
            <person name="Barthorpe S."/>
            <person name="Bhamra G."/>
            <person name="Buck G."/>
            <person name="Choudhury B."/>
            <person name="Clements J."/>
            <person name="Cole J."/>
            <person name="Dicks E."/>
            <person name="Forbes S."/>
            <person name="Gray K."/>
            <person name="Halliday K."/>
            <person name="Harrison R."/>
            <person name="Hills K."/>
            <person name="Hinton J."/>
            <person name="Jenkinson A."/>
            <person name="Jones D."/>
            <person name="Menzies A."/>
            <person name="Mironenko T."/>
            <person name="Perry J."/>
            <person name="Raine K."/>
            <person name="Richardson D."/>
            <person name="Shepherd R."/>
            <person name="Small A."/>
            <person name="Tofts C."/>
            <person name="Varian J."/>
            <person name="Webb T."/>
            <person name="West S."/>
            <person name="Widaa S."/>
            <person name="Yates A."/>
            <person name="Cahill D.P."/>
            <person name="Louis D.N."/>
            <person name="Goldstraw P."/>
            <person name="Nicholson A.G."/>
            <person name="Brasseur F."/>
            <person name="Looijenga L."/>
            <person name="Weber B.L."/>
            <person name="Chiew Y.-E."/>
            <person name="DeFazio A."/>
            <person name="Greaves M.F."/>
            <person name="Green A.R."/>
            <person name="Campbell P."/>
            <person name="Birney E."/>
            <person name="Easton D.F."/>
            <person name="Chenevix-Trench G."/>
            <person name="Tan M.-H."/>
            <person name="Khoo S.K."/>
            <person name="Teh B.T."/>
            <person name="Yuen S.T."/>
            <person name="Leung S.Y."/>
            <person name="Wooster R."/>
            <person name="Futreal P.A."/>
            <person name="Stratton M.R."/>
        </authorList>
    </citation>
    <scope>VARIANT [LARGE SCALE ANALYSIS] VAL-96</scope>
</reference>
<reference key="15">
    <citation type="journal article" date="2008" name="Nat. Genet.">
        <title>Mutations of CASK cause an X-linked brain malformation phenotype with microcephaly and hypoplasia of the brainstem and cerebellum.</title>
        <authorList>
            <person name="Najm J."/>
            <person name="Horn D."/>
            <person name="Wimplinger I."/>
            <person name="Golden J.A."/>
            <person name="Chizhikov V.V."/>
            <person name="Sudi J."/>
            <person name="Christian S.L."/>
            <person name="Ullmann R."/>
            <person name="Kuechler A."/>
            <person name="Haas C.A."/>
            <person name="Flubacher A."/>
            <person name="Charnas L.R."/>
            <person name="Uyanik G."/>
            <person name="Frank U."/>
            <person name="Klopocki E."/>
            <person name="Dobyns W.B."/>
            <person name="Kutsche K."/>
        </authorList>
    </citation>
    <scope>INVOLVEMENT IN MICPCH SYNDROME</scope>
</reference>
<reference key="16">
    <citation type="journal article" date="2008" name="Nat. Genet.">
        <authorList>
            <person name="Najm J."/>
            <person name="Horn D."/>
            <person name="Wimplinger I."/>
            <person name="Golden J.A."/>
            <person name="Chizhikov V.V."/>
            <person name="Sudi J."/>
            <person name="Christian S.L."/>
            <person name="Ullmann R."/>
            <person name="Kuechler A."/>
            <person name="Haas C.A."/>
            <person name="Flubacher A."/>
            <person name="Charnas L.R."/>
            <person name="Uyanik G."/>
            <person name="Frank U."/>
            <person name="Klopocki E."/>
            <person name="Dobyns W.B."/>
            <person name="Kutsche K."/>
        </authorList>
    </citation>
    <scope>ERRATUM OF PUBMED:19165920</scope>
</reference>
<reference key="17">
    <citation type="journal article" date="2009" name="Am. J. Hum. Genet.">
        <title>A missense mutation in CASK causes FG syndrome in an Italian family.</title>
        <authorList>
            <person name="Piluso G."/>
            <person name="D'Amico F."/>
            <person name="Saccone V."/>
            <person name="Bismuto E."/>
            <person name="Rotundo I.L."/>
            <person name="Di Domenico M."/>
            <person name="Aurino S."/>
            <person name="Schwartz C.E."/>
            <person name="Neri G."/>
            <person name="Nigro V."/>
        </authorList>
    </citation>
    <scope>VARIANT FGS4 LEU-28</scope>
    <scope>CHARACTERIZATION OF VARIANT FGS4 LEU-28</scope>
</reference>
<reference key="18">
    <citation type="journal article" date="2009" name="Nat. Genet.">
        <title>A systematic, large-scale resequencing screen of X-chromosome coding exons in mental retardation.</title>
        <authorList>
            <person name="Tarpey P.S."/>
            <person name="Smith R."/>
            <person name="Pleasance E."/>
            <person name="Whibley A."/>
            <person name="Edkins S."/>
            <person name="Hardy C."/>
            <person name="O'Meara S."/>
            <person name="Latimer C."/>
            <person name="Dicks E."/>
            <person name="Menzies A."/>
            <person name="Stephens P."/>
            <person name="Blow M."/>
            <person name="Greenman C."/>
            <person name="Xue Y."/>
            <person name="Tyler-Smith C."/>
            <person name="Thompson D."/>
            <person name="Gray K."/>
            <person name="Andrews J."/>
            <person name="Barthorpe S."/>
            <person name="Buck G."/>
            <person name="Cole J."/>
            <person name="Dunmore R."/>
            <person name="Jones D."/>
            <person name="Maddison M."/>
            <person name="Mironenko T."/>
            <person name="Turner R."/>
            <person name="Turrell K."/>
            <person name="Varian J."/>
            <person name="West S."/>
            <person name="Widaa S."/>
            <person name="Wray P."/>
            <person name="Teague J."/>
            <person name="Butler A."/>
            <person name="Jenkinson A."/>
            <person name="Jia M."/>
            <person name="Richardson D."/>
            <person name="Shepherd R."/>
            <person name="Wooster R."/>
            <person name="Tejada M.I."/>
            <person name="Martinez F."/>
            <person name="Carvill G."/>
            <person name="Goliath R."/>
            <person name="de Brouwer A.P."/>
            <person name="van Bokhoven H."/>
            <person name="Van Esch H."/>
            <person name="Chelly J."/>
            <person name="Raynaud M."/>
            <person name="Ropers H.H."/>
            <person name="Abidi F.E."/>
            <person name="Srivastava A.K."/>
            <person name="Cox J."/>
            <person name="Luo Y."/>
            <person name="Mallya U."/>
            <person name="Moon J."/>
            <person name="Parnau J."/>
            <person name="Mohammed S."/>
            <person name="Tolmie J.L."/>
            <person name="Shoubridge C."/>
            <person name="Corbett M."/>
            <person name="Gardner A."/>
            <person name="Haan E."/>
            <person name="Rujirabanjerd S."/>
            <person name="Shaw M."/>
            <person name="Vandeleur L."/>
            <person name="Fullston T."/>
            <person name="Easton D.F."/>
            <person name="Boyle J."/>
            <person name="Partington M."/>
            <person name="Hackett A."/>
            <person name="Field M."/>
            <person name="Skinner C."/>
            <person name="Stevenson R.E."/>
            <person name="Bobrow M."/>
            <person name="Turner G."/>
            <person name="Schwartz C.E."/>
            <person name="Gecz J."/>
            <person name="Raymond F.L."/>
            <person name="Futreal P.A."/>
            <person name="Stratton M.R."/>
        </authorList>
    </citation>
    <scope>VARIANTS [LARGE SCALE ANALYSIS] MICPCH HIS-268; SER-396 AND GLY-710</scope>
</reference>
<reference key="19">
    <citation type="journal article" date="2013" name="Epilepsia">
        <title>Targeted capture and sequencing for detection of mutations causing early onset epileptic encephalopathy.</title>
        <authorList>
            <person name="Kodera H."/>
            <person name="Kato M."/>
            <person name="Nord A.S."/>
            <person name="Walsh T."/>
            <person name="Lee M."/>
            <person name="Yamanaka G."/>
            <person name="Tohyama J."/>
            <person name="Nakamura K."/>
            <person name="Nakagawa E."/>
            <person name="Ikeda T."/>
            <person name="Ben-Zeev B."/>
            <person name="Lev D."/>
            <person name="Lerman-Sagie T."/>
            <person name="Straussberg R."/>
            <person name="Tanabe S."/>
            <person name="Ueda K."/>
            <person name="Amamoto M."/>
            <person name="Ohta S."/>
            <person name="Nonoda Y."/>
            <person name="Nishiyama K."/>
            <person name="Tsurusaki Y."/>
            <person name="Nakashima M."/>
            <person name="Miyake N."/>
            <person name="Hayasaka K."/>
            <person name="King M.C."/>
            <person name="Matsumoto N."/>
            <person name="Saitsu H."/>
        </authorList>
    </citation>
    <scope>VARIANT 19-GLY--TYR-926 DEL</scope>
</reference>
<feature type="chain" id="PRO_0000094568" description="Peripheral plasma membrane protein CASK">
    <location>
        <begin position="1"/>
        <end position="926"/>
    </location>
</feature>
<feature type="domain" description="Protein kinase" evidence="6">
    <location>
        <begin position="12"/>
        <end position="276"/>
    </location>
</feature>
<feature type="domain" description="L27 1" evidence="8">
    <location>
        <begin position="343"/>
        <end position="398"/>
    </location>
</feature>
<feature type="domain" description="L27 2" evidence="8">
    <location>
        <begin position="402"/>
        <end position="455"/>
    </location>
</feature>
<feature type="domain" description="PDZ" evidence="5">
    <location>
        <begin position="489"/>
        <end position="564"/>
    </location>
</feature>
<feature type="domain" description="SH3" evidence="7">
    <location>
        <begin position="612"/>
        <end position="682"/>
    </location>
</feature>
<feature type="domain" description="Guanylate kinase-like" evidence="4">
    <location>
        <begin position="739"/>
        <end position="911"/>
    </location>
</feature>
<feature type="region of interest" description="Calmodulin-binding">
    <location>
        <begin position="305"/>
        <end position="315"/>
    </location>
</feature>
<feature type="region of interest" description="Required for interaction with NRXN1 (via C-terminal tail)" evidence="3">
    <location>
        <begin position="482"/>
        <end position="909"/>
    </location>
</feature>
<feature type="region of interest" description="Disordered" evidence="9">
    <location>
        <begin position="574"/>
        <end position="610"/>
    </location>
</feature>
<feature type="active site" evidence="1">
    <location>
        <position position="141"/>
    </location>
</feature>
<feature type="binding site" evidence="4 6">
    <location>
        <begin position="18"/>
        <end position="26"/>
    </location>
    <ligand>
        <name>ATP</name>
        <dbReference type="ChEBI" id="CHEBI:30616"/>
    </ligand>
</feature>
<feature type="binding site" evidence="6">
    <location>
        <position position="41"/>
    </location>
    <ligand>
        <name>ATP</name>
        <dbReference type="ChEBI" id="CHEBI:30616"/>
    </ligand>
</feature>
<feature type="modified residue" description="Phosphoserine" evidence="28">
    <location>
        <position position="51"/>
    </location>
</feature>
<feature type="modified residue" description="Phosphoserine; by autocatalysis" evidence="12">
    <location>
        <position position="151"/>
    </location>
</feature>
<feature type="modified residue" description="Phosphoserine; by autocatalysis" evidence="12">
    <location>
        <position position="155"/>
    </location>
</feature>
<feature type="modified residue" description="Phosphothreonine" evidence="2">
    <location>
        <position position="182"/>
    </location>
</feature>
<feature type="modified residue" description="Phosphoserine" evidence="29">
    <location>
        <position position="313"/>
    </location>
</feature>
<feature type="splice variant" id="VSP_024421" description="In isoform 5." evidence="23">
    <location>
        <begin position="1"/>
        <end position="385"/>
    </location>
</feature>
<feature type="splice variant" id="VSP_024422" description="In isoform 3." evidence="19 22">
    <location>
        <begin position="340"/>
        <end position="345"/>
    </location>
</feature>
<feature type="splice variant" id="VSP_024423" description="In isoform 5." evidence="23">
    <original>L</original>
    <variation>M</variation>
    <location>
        <position position="386"/>
    </location>
</feature>
<feature type="splice variant" id="VSP_024424" description="In isoform 3, isoform 4 and isoform 5." evidence="19 20 22 23">
    <location>
        <begin position="580"/>
        <end position="602"/>
    </location>
</feature>
<feature type="splice variant" id="VSP_024425" description="In isoform 6." evidence="26">
    <location>
        <begin position="603"/>
        <end position="614"/>
    </location>
</feature>
<feature type="splice variant" id="VSP_024426" description="In isoform 2, isoform 4 and isoform 6." evidence="20 21 24 25">
    <location>
        <begin position="719"/>
        <end position="723"/>
    </location>
</feature>
<feature type="sequence variant" id="VAR_078710" description="Found in a patient with epilepsy and pontocerebellar hypoplasia; likely pathogenic." evidence="17">
    <location>
        <begin position="19"/>
        <end position="926"/>
    </location>
</feature>
<feature type="sequence variant" id="VAR_058719" description="In FGS4; does not reveal significant alterations induced by the mutation substitution; causes a partial skipping of exon 2 of the protein; dbSNP:rs137852816." evidence="15">
    <original>R</original>
    <variation>L</variation>
    <location>
        <position position="28"/>
    </location>
</feature>
<feature type="sequence variant" id="VAR_041956" description="In a lung large cell carcinoma sample; somatic mutation." evidence="11">
    <original>G</original>
    <variation>V</variation>
    <location>
        <position position="96"/>
    </location>
</feature>
<feature type="sequence variant" id="VAR_062996" description="In MICPCH; dbSNP:rs137852817." evidence="16">
    <original>Y</original>
    <variation>H</variation>
    <location>
        <position position="268"/>
    </location>
</feature>
<feature type="sequence variant" id="VAR_062997" description="In MICPCH; dbSNP:rs137852820." evidence="16">
    <original>P</original>
    <variation>S</variation>
    <location>
        <position position="396"/>
    </location>
</feature>
<feature type="sequence variant" id="VAR_062998" description="In MICPCH; dbSNP:rs137852818." evidence="16">
    <original>D</original>
    <variation>G</variation>
    <location>
        <position position="710"/>
    </location>
</feature>
<feature type="sequence conflict" description="In Ref. 2; AAB88198." evidence="26" ref="2">
    <original>P</original>
    <variation>L</variation>
    <location>
        <position position="401"/>
    </location>
</feature>
<feature type="sequence conflict" description="In Ref. 1; AAB88125, 3; BAB12252, 4; AAU10527 and 8; AAF72666/AAF72667." evidence="26" ref="1 3 4 8">
    <original>D</original>
    <variation>G</variation>
    <location>
        <position position="479"/>
    </location>
</feature>
<feature type="sequence conflict" description="In Ref. 1; AAB88125 and 4; AAU10527." evidence="26" ref="1 4">
    <original>P</original>
    <variation>S</variation>
    <location>
        <position position="675"/>
    </location>
</feature>
<feature type="sequence conflict" description="In Ref. 1; AAB88125 and 4; AAU10527." evidence="26" ref="1 4">
    <original>K</original>
    <variation>R</variation>
    <location>
        <position position="780"/>
    </location>
</feature>
<feature type="helix" evidence="34">
    <location>
        <begin position="8"/>
        <end position="11"/>
    </location>
</feature>
<feature type="strand" evidence="34">
    <location>
        <begin position="12"/>
        <end position="20"/>
    </location>
</feature>
<feature type="strand" evidence="34">
    <location>
        <begin position="22"/>
        <end position="31"/>
    </location>
</feature>
<feature type="turn" evidence="34">
    <location>
        <begin position="32"/>
        <end position="34"/>
    </location>
</feature>
<feature type="strand" evidence="34">
    <location>
        <begin position="37"/>
        <end position="44"/>
    </location>
</feature>
<feature type="helix" evidence="34">
    <location>
        <begin position="45"/>
        <end position="49"/>
    </location>
</feature>
<feature type="strand" evidence="34">
    <location>
        <begin position="51"/>
        <end position="53"/>
    </location>
</feature>
<feature type="helix" evidence="34">
    <location>
        <begin position="56"/>
        <end position="68"/>
    </location>
</feature>
<feature type="strand" evidence="34">
    <location>
        <begin position="77"/>
        <end position="83"/>
    </location>
</feature>
<feature type="strand" evidence="34">
    <location>
        <begin position="86"/>
        <end position="92"/>
    </location>
</feature>
<feature type="helix" evidence="34">
    <location>
        <begin position="99"/>
        <end position="108"/>
    </location>
</feature>
<feature type="helix" evidence="34">
    <location>
        <begin position="115"/>
        <end position="134"/>
    </location>
</feature>
<feature type="helix" evidence="34">
    <location>
        <begin position="144"/>
        <end position="146"/>
    </location>
</feature>
<feature type="strand" evidence="34">
    <location>
        <begin position="147"/>
        <end position="149"/>
    </location>
</feature>
<feature type="strand" evidence="34">
    <location>
        <begin position="151"/>
        <end position="153"/>
    </location>
</feature>
<feature type="strand" evidence="34">
    <location>
        <begin position="158"/>
        <end position="160"/>
    </location>
</feature>
<feature type="helix" evidence="36">
    <location>
        <begin position="163"/>
        <end position="165"/>
    </location>
</feature>
<feature type="strand" evidence="35">
    <location>
        <begin position="171"/>
        <end position="173"/>
    </location>
</feature>
<feature type="helix" evidence="34">
    <location>
        <begin position="183"/>
        <end position="185"/>
    </location>
</feature>
<feature type="helix" evidence="34">
    <location>
        <begin position="188"/>
        <end position="191"/>
    </location>
</feature>
<feature type="helix" evidence="34">
    <location>
        <begin position="199"/>
        <end position="214"/>
    </location>
</feature>
<feature type="helix" evidence="34">
    <location>
        <begin position="223"/>
        <end position="232"/>
    </location>
</feature>
<feature type="helix" evidence="34">
    <location>
        <begin position="239"/>
        <end position="242"/>
    </location>
</feature>
<feature type="helix" evidence="34">
    <location>
        <begin position="247"/>
        <end position="256"/>
    </location>
</feature>
<feature type="turn" evidence="34">
    <location>
        <begin position="261"/>
        <end position="263"/>
    </location>
</feature>
<feature type="helix" evidence="34">
    <location>
        <begin position="267"/>
        <end position="271"/>
    </location>
</feature>
<feature type="helix" evidence="34">
    <location>
        <begin position="274"/>
        <end position="277"/>
    </location>
</feature>
<feature type="helix" evidence="34">
    <location>
        <begin position="279"/>
        <end position="282"/>
    </location>
</feature>
<feature type="helix" evidence="34">
    <location>
        <begin position="289"/>
        <end position="302"/>
    </location>
</feature>
<feature type="turn" evidence="36">
    <location>
        <begin position="304"/>
        <end position="306"/>
    </location>
</feature>
<feature type="helix" evidence="33">
    <location>
        <begin position="309"/>
        <end position="312"/>
    </location>
</feature>
<feature type="strand" evidence="33">
    <location>
        <begin position="314"/>
        <end position="316"/>
    </location>
</feature>
<feature type="helix" evidence="32">
    <location>
        <begin position="404"/>
        <end position="416"/>
    </location>
</feature>
<feature type="helix" evidence="32">
    <location>
        <begin position="423"/>
        <end position="431"/>
    </location>
</feature>
<feature type="helix" evidence="32">
    <location>
        <begin position="437"/>
        <end position="450"/>
    </location>
</feature>
<feature type="strand" evidence="31">
    <location>
        <begin position="489"/>
        <end position="495"/>
    </location>
</feature>
<feature type="strand" evidence="31">
    <location>
        <begin position="497"/>
        <end position="499"/>
    </location>
</feature>
<feature type="strand" evidence="31">
    <location>
        <begin position="503"/>
        <end position="506"/>
    </location>
</feature>
<feature type="helix" evidence="31">
    <location>
        <begin position="510"/>
        <end position="512"/>
    </location>
</feature>
<feature type="strand" evidence="31">
    <location>
        <begin position="513"/>
        <end position="518"/>
    </location>
</feature>
<feature type="helix" evidence="31">
    <location>
        <begin position="523"/>
        <end position="527"/>
    </location>
</feature>
<feature type="strand" evidence="31">
    <location>
        <begin position="535"/>
        <end position="539"/>
    </location>
</feature>
<feature type="helix" evidence="31">
    <location>
        <begin position="544"/>
        <end position="546"/>
    </location>
</feature>
<feature type="helix" evidence="31">
    <location>
        <begin position="549"/>
        <end position="558"/>
    </location>
</feature>
<feature type="strand" evidence="31">
    <location>
        <begin position="561"/>
        <end position="568"/>
    </location>
</feature>
<feature type="strand" evidence="30">
    <location>
        <begin position="741"/>
        <end position="745"/>
    </location>
</feature>
<feature type="helix" evidence="30">
    <location>
        <begin position="752"/>
        <end position="762"/>
    </location>
</feature>
<feature type="turn" evidence="30">
    <location>
        <begin position="764"/>
        <end position="766"/>
    </location>
</feature>
<feature type="turn" evidence="30">
    <location>
        <begin position="784"/>
        <end position="786"/>
    </location>
</feature>
<feature type="helix" evidence="30">
    <location>
        <begin position="793"/>
        <end position="801"/>
    </location>
</feature>
<feature type="strand" evidence="30">
    <location>
        <begin position="805"/>
        <end position="811"/>
    </location>
</feature>
<feature type="strand" evidence="30">
    <location>
        <begin position="814"/>
        <end position="819"/>
    </location>
</feature>
<feature type="helix" evidence="30">
    <location>
        <begin position="820"/>
        <end position="828"/>
    </location>
</feature>
<feature type="strand" evidence="30">
    <location>
        <begin position="832"/>
        <end position="836"/>
    </location>
</feature>
<feature type="helix" evidence="30">
    <location>
        <begin position="839"/>
        <end position="841"/>
    </location>
</feature>
<feature type="helix" evidence="30">
    <location>
        <begin position="842"/>
        <end position="845"/>
    </location>
</feature>
<feature type="turn" evidence="30">
    <location>
        <begin position="848"/>
        <end position="850"/>
    </location>
</feature>
<feature type="strand" evidence="30">
    <location>
        <begin position="852"/>
        <end position="858"/>
    </location>
</feature>
<feature type="helix" evidence="30">
    <location>
        <begin position="870"/>
        <end position="886"/>
    </location>
</feature>
<feature type="helix" evidence="30">
    <location>
        <begin position="887"/>
        <end position="889"/>
    </location>
</feature>
<feature type="strand" evidence="30">
    <location>
        <begin position="891"/>
        <end position="895"/>
    </location>
</feature>
<feature type="helix" evidence="30">
    <location>
        <begin position="899"/>
        <end position="913"/>
    </location>
</feature>
<feature type="modified residue" description="Phosphoserine" evidence="29">
    <location sequence="O14936-3">
        <position position="571"/>
    </location>
</feature>
<feature type="modified residue" description="Phosphoserine" evidence="29">
    <location sequence="O14936-4">
        <position position="577"/>
    </location>
</feature>
<feature type="modified residue" description="Phosphoserine" evidence="29">
    <location sequence="O14936-5">
        <position position="192"/>
    </location>
</feature>
<name>CSKP_HUMAN</name>
<organism>
    <name type="scientific">Homo sapiens</name>
    <name type="common">Human</name>
    <dbReference type="NCBI Taxonomy" id="9606"/>
    <lineage>
        <taxon>Eukaryota</taxon>
        <taxon>Metazoa</taxon>
        <taxon>Chordata</taxon>
        <taxon>Craniata</taxon>
        <taxon>Vertebrata</taxon>
        <taxon>Euteleostomi</taxon>
        <taxon>Mammalia</taxon>
        <taxon>Eutheria</taxon>
        <taxon>Euarchontoglires</taxon>
        <taxon>Primates</taxon>
        <taxon>Haplorrhini</taxon>
        <taxon>Catarrhini</taxon>
        <taxon>Hominidae</taxon>
        <taxon>Homo</taxon>
    </lineage>
</organism>
<sequence length="926" mass="105123">MADDDVLFEDVYELCEVIGKGPFSVVRRCINRETGQQFAVKIVDVAKFTSSPGLSTEDLKREASICHMLKHPHIVELLETYSSDGMLYMVFEFMDGADLCFEIVKRADAGFVYSEAVASHYMRQILEALRYCHDNNIIHRDVKPHCVLLASKENSAPVKLGGFGVAIQLGESGLVAGGRVGTPHFMAPEVVKREPYGKPVDVWGCGVILFILLSGCLPFYGTKERLFEGIIKGKYKMNPRQWSHISESAKDLVRRMLMLDPAERITVYEALNHPWLKERDRYAYKIHLPETVEQLRKFNARRKLKGAVLAAVSSHKFNSFYGDPPEELPDFSEDPTSSGLLAAERAVSQVLDSLEEIHALTDCSEKDLDFLHSVFQDQHLHTLLDLYDKINTKSSPQIRNPPSDAVQRAKEVLEEISCYPENNDAKELKRILTQPHFMALLQTHDVVAHEVYSDEALRVTPPPTSPYLNGDSPESANGDMDMENVTRVRLVQFQKNTDEPMGITLKMNELNHCIVARIMHGGMIHRQGTLHVGDEIREINGISVANQTVEQLQKMLREMRGSITFKIVPSYRTQSSSCERDSPSTSRQSPANGHSSTNNSVSDLPSTTQPKGRQIYVRAQFEYDPAKDDLIPCKEAGIRFRVGDIIQIISKDDHNWWQGKLENSKNGTAGLIPSPELQEWRVACIAMEKTKQEQQASCTWFGKKKKQYKDKYLAKHNAVFDQLDLVTYEEVVKLPAFKRKTLVLLGAHGVGRRHIKNTLITKHPDRFAYPIPHTTRPPKKDEENGKNYYFVSHDQMMQDISNNEYLEYGSHEDAMYGTKLETIRKIHEQGLIAILDVEPQALKVLRTAEFAPFVVFIAAPTITPGLNEDESLQRLQKESDILQRTYAHYFDLTIINNEIDETIRHLEEAVELVCTAPQWVPVSWVY</sequence>
<gene>
    <name evidence="27" type="primary">CASK</name>
    <name type="synonym">LIN2</name>
</gene>
<dbReference type="EC" id="2.7.11.1" evidence="12"/>
<dbReference type="EMBL" id="AF032119">
    <property type="protein sequence ID" value="AAB88125.1"/>
    <property type="molecule type" value="mRNA"/>
</dbReference>
<dbReference type="EMBL" id="AF035582">
    <property type="protein sequence ID" value="AAB88198.1"/>
    <property type="molecule type" value="mRNA"/>
</dbReference>
<dbReference type="EMBL" id="AB039327">
    <property type="protein sequence ID" value="BAB12252.2"/>
    <property type="molecule type" value="mRNA"/>
</dbReference>
<dbReference type="EMBL" id="AY705392">
    <property type="protein sequence ID" value="AAU10527.1"/>
    <property type="molecule type" value="mRNA"/>
</dbReference>
<dbReference type="EMBL" id="AL158144">
    <property type="status" value="NOT_ANNOTATED_CDS"/>
    <property type="molecule type" value="Genomic_DNA"/>
</dbReference>
<dbReference type="EMBL" id="AL353691">
    <property type="status" value="NOT_ANNOTATED_CDS"/>
    <property type="molecule type" value="Genomic_DNA"/>
</dbReference>
<dbReference type="EMBL" id="AL445239">
    <property type="status" value="NOT_ANNOTATED_CDS"/>
    <property type="molecule type" value="Genomic_DNA"/>
</dbReference>
<dbReference type="EMBL" id="AL603754">
    <property type="status" value="NOT_ANNOTATED_CDS"/>
    <property type="molecule type" value="Genomic_DNA"/>
</dbReference>
<dbReference type="EMBL" id="AL627402">
    <property type="status" value="NOT_ANNOTATED_CDS"/>
    <property type="molecule type" value="Genomic_DNA"/>
</dbReference>
<dbReference type="EMBL" id="BC117311">
    <property type="protein sequence ID" value="AAI17312.1"/>
    <property type="molecule type" value="mRNA"/>
</dbReference>
<dbReference type="EMBL" id="BC143454">
    <property type="protein sequence ID" value="AAI43455.1"/>
    <property type="molecule type" value="mRNA"/>
</dbReference>
<dbReference type="EMBL" id="AB208859">
    <property type="protein sequence ID" value="BAD92096.1"/>
    <property type="molecule type" value="mRNA"/>
</dbReference>
<dbReference type="EMBL" id="AF262404">
    <property type="protein sequence ID" value="AAF72666.1"/>
    <property type="molecule type" value="mRNA"/>
</dbReference>
<dbReference type="EMBL" id="AF262405">
    <property type="protein sequence ID" value="AAF72667.1"/>
    <property type="molecule type" value="mRNA"/>
</dbReference>
<dbReference type="CCDS" id="CCDS14257.1">
    <molecule id="O14936-2"/>
</dbReference>
<dbReference type="CCDS" id="CCDS48094.1">
    <molecule id="O14936-3"/>
</dbReference>
<dbReference type="CCDS" id="CCDS48095.1">
    <molecule id="O14936-4"/>
</dbReference>
<dbReference type="CCDS" id="CCDS94598.1">
    <molecule id="O14936-1"/>
</dbReference>
<dbReference type="RefSeq" id="NP_001119526.1">
    <molecule id="O14936-4"/>
    <property type="nucleotide sequence ID" value="NM_001126054.3"/>
</dbReference>
<dbReference type="RefSeq" id="NP_001119527.1">
    <molecule id="O14936-3"/>
    <property type="nucleotide sequence ID" value="NM_001126055.3"/>
</dbReference>
<dbReference type="RefSeq" id="NP_001354650.1">
    <molecule id="O14936-1"/>
    <property type="nucleotide sequence ID" value="NM_001367721.1"/>
</dbReference>
<dbReference type="RefSeq" id="NP_003679.2">
    <molecule id="O14936-2"/>
    <property type="nucleotide sequence ID" value="NM_003688.4"/>
</dbReference>
<dbReference type="PDB" id="1KGD">
    <property type="method" value="X-ray"/>
    <property type="resolution" value="1.31 A"/>
    <property type="chains" value="A=739-914"/>
</dbReference>
<dbReference type="PDB" id="1KWA">
    <property type="method" value="X-ray"/>
    <property type="resolution" value="1.93 A"/>
    <property type="chains" value="A/B=487-572"/>
</dbReference>
<dbReference type="PDB" id="1ZL8">
    <property type="method" value="NMR"/>
    <property type="chains" value="B=403-456"/>
</dbReference>
<dbReference type="PDB" id="3C0G">
    <property type="method" value="X-ray"/>
    <property type="resolution" value="2.19 A"/>
    <property type="chains" value="A/B=1-337"/>
</dbReference>
<dbReference type="PDB" id="3C0H">
    <property type="method" value="X-ray"/>
    <property type="resolution" value="2.30 A"/>
    <property type="chains" value="A/B=1-337"/>
</dbReference>
<dbReference type="PDB" id="3C0I">
    <property type="method" value="X-ray"/>
    <property type="resolution" value="1.85 A"/>
    <property type="chains" value="A=1-337"/>
</dbReference>
<dbReference type="PDB" id="3MFR">
    <property type="method" value="X-ray"/>
    <property type="resolution" value="2.00 A"/>
    <property type="chains" value="A=1-337"/>
</dbReference>
<dbReference type="PDB" id="3MFS">
    <property type="method" value="X-ray"/>
    <property type="resolution" value="2.10 A"/>
    <property type="chains" value="A=1-337"/>
</dbReference>
<dbReference type="PDB" id="3MFT">
    <property type="method" value="X-ray"/>
    <property type="resolution" value="2.20 A"/>
    <property type="chains" value="A=1-337"/>
</dbReference>
<dbReference type="PDB" id="3MFU">
    <property type="method" value="X-ray"/>
    <property type="resolution" value="2.30 A"/>
    <property type="chains" value="A=1-337"/>
</dbReference>
<dbReference type="PDB" id="3TAC">
    <property type="method" value="X-ray"/>
    <property type="resolution" value="2.20 A"/>
    <property type="chains" value="A=1-345"/>
</dbReference>
<dbReference type="PDB" id="6KMH">
    <property type="method" value="X-ray"/>
    <property type="resolution" value="2.40 A"/>
    <property type="chains" value="A/B=1-319"/>
</dbReference>
<dbReference type="PDB" id="7OAI">
    <property type="method" value="X-ray"/>
    <property type="resolution" value="2.30 A"/>
    <property type="chains" value="A/B/C/D=1-337"/>
</dbReference>
<dbReference type="PDB" id="7OAJ">
    <property type="method" value="X-ray"/>
    <property type="resolution" value="1.93 A"/>
    <property type="chains" value="A/B/C/D=1-337"/>
</dbReference>
<dbReference type="PDB" id="7OAK">
    <property type="method" value="X-ray"/>
    <property type="resolution" value="2.23 A"/>
    <property type="chains" value="A/B/C/D=1-337"/>
</dbReference>
<dbReference type="PDB" id="7OAL">
    <property type="method" value="X-ray"/>
    <property type="resolution" value="2.17 A"/>
    <property type="chains" value="A/B/C/D=1-337"/>
</dbReference>
<dbReference type="PDBsum" id="1KGD"/>
<dbReference type="PDBsum" id="1KWA"/>
<dbReference type="PDBsum" id="1ZL8"/>
<dbReference type="PDBsum" id="3C0G"/>
<dbReference type="PDBsum" id="3C0H"/>
<dbReference type="PDBsum" id="3C0I"/>
<dbReference type="PDBsum" id="3MFR"/>
<dbReference type="PDBsum" id="3MFS"/>
<dbReference type="PDBsum" id="3MFT"/>
<dbReference type="PDBsum" id="3MFU"/>
<dbReference type="PDBsum" id="3TAC"/>
<dbReference type="PDBsum" id="6KMH"/>
<dbReference type="PDBsum" id="7OAI"/>
<dbReference type="PDBsum" id="7OAJ"/>
<dbReference type="PDBsum" id="7OAK"/>
<dbReference type="PDBsum" id="7OAL"/>
<dbReference type="SMR" id="O14936"/>
<dbReference type="BioGRID" id="114141">
    <property type="interactions" value="209"/>
</dbReference>
<dbReference type="ComplexPortal" id="CPX-7743">
    <property type="entry name" value="LIN-10-LIN-2-LIN-7 complex, LIN7B variant"/>
</dbReference>
<dbReference type="ComplexPortal" id="CPX-7744">
    <property type="entry name" value="LIN-10-LIN-2-LIN-7 complex, LIN7A variant"/>
</dbReference>
<dbReference type="ComplexPortal" id="CPX-7745">
    <property type="entry name" value="LIN-10-LIN-2-LIN-7 complex, LIN7C variant"/>
</dbReference>
<dbReference type="CORUM" id="O14936"/>
<dbReference type="DIP" id="DIP-38727N"/>
<dbReference type="ELM" id="O14936"/>
<dbReference type="FunCoup" id="O14936">
    <property type="interactions" value="1287"/>
</dbReference>
<dbReference type="IntAct" id="O14936">
    <property type="interactions" value="119"/>
</dbReference>
<dbReference type="MINT" id="O14936"/>
<dbReference type="STRING" id="9606.ENSP00000494788"/>
<dbReference type="BindingDB" id="O14936"/>
<dbReference type="ChEMBL" id="CHEMBL1908381"/>
<dbReference type="DrugBank" id="DB01942">
    <property type="generic name" value="Formic acid"/>
</dbReference>
<dbReference type="DrugBank" id="DB12010">
    <property type="generic name" value="Fostamatinib"/>
</dbReference>
<dbReference type="DrugCentral" id="O14936"/>
<dbReference type="GuidetoPHARMACOLOGY" id="1959"/>
<dbReference type="GlyCosmos" id="O14936">
    <property type="glycosylation" value="1 site, 1 glycan"/>
</dbReference>
<dbReference type="GlyGen" id="O14936">
    <property type="glycosylation" value="3 sites, 1 N-linked glycan (1 site), 1 O-linked glycan (1 site)"/>
</dbReference>
<dbReference type="iPTMnet" id="O14936"/>
<dbReference type="PhosphoSitePlus" id="O14936"/>
<dbReference type="SwissPalm" id="O14936"/>
<dbReference type="BioMuta" id="CASK"/>
<dbReference type="jPOST" id="O14936"/>
<dbReference type="MassIVE" id="O14936"/>
<dbReference type="PaxDb" id="9606-ENSP00000367408"/>
<dbReference type="PeptideAtlas" id="O14936"/>
<dbReference type="ProteomicsDB" id="48318">
    <molecule id="O14936-1"/>
</dbReference>
<dbReference type="ProteomicsDB" id="48319">
    <molecule id="O14936-2"/>
</dbReference>
<dbReference type="ProteomicsDB" id="48320">
    <molecule id="O14936-3"/>
</dbReference>
<dbReference type="ProteomicsDB" id="48321">
    <molecule id="O14936-4"/>
</dbReference>
<dbReference type="ProteomicsDB" id="48322">
    <molecule id="O14936-5"/>
</dbReference>
<dbReference type="ProteomicsDB" id="48323">
    <molecule id="O14936-6"/>
</dbReference>
<dbReference type="Pumba" id="O14936"/>
<dbReference type="TopDownProteomics" id="O14936-5">
    <molecule id="O14936-5"/>
</dbReference>
<dbReference type="ABCD" id="O14936">
    <property type="antibodies" value="1 sequenced antibody"/>
</dbReference>
<dbReference type="Antibodypedia" id="4529">
    <property type="antibodies" value="301 antibodies from 39 providers"/>
</dbReference>
<dbReference type="DNASU" id="8573"/>
<dbReference type="Ensembl" id="ENST00000378154.3">
    <molecule id="O14936-6"/>
    <property type="protein sequence ID" value="ENSP00000367396.2"/>
    <property type="gene ID" value="ENSG00000147044.23"/>
</dbReference>
<dbReference type="Ensembl" id="ENST00000378163.7">
    <molecule id="O14936-1"/>
    <property type="protein sequence ID" value="ENSP00000367405.1"/>
    <property type="gene ID" value="ENSG00000147044.23"/>
</dbReference>
<dbReference type="Ensembl" id="ENST00000644347.1">
    <molecule id="O14936-3"/>
    <property type="protein sequence ID" value="ENSP00000494183.1"/>
    <property type="gene ID" value="ENSG00000147044.23"/>
</dbReference>
<dbReference type="Ensembl" id="ENST00000645566.1">
    <molecule id="O14936-2"/>
    <property type="protein sequence ID" value="ENSP00000494788.1"/>
    <property type="gene ID" value="ENSG00000147044.23"/>
</dbReference>
<dbReference type="Ensembl" id="ENST00000646120.2">
    <molecule id="O14936-4"/>
    <property type="protein sequence ID" value="ENSP00000495291.2"/>
    <property type="gene ID" value="ENSG00000147044.23"/>
</dbReference>
<dbReference type="GeneID" id="8573"/>
<dbReference type="KEGG" id="hsa:8573"/>
<dbReference type="MANE-Select" id="ENST00000378163.7">
    <property type="protein sequence ID" value="ENSP00000367405.1"/>
    <property type="RefSeq nucleotide sequence ID" value="NM_001367721.1"/>
    <property type="RefSeq protein sequence ID" value="NP_001354650.1"/>
</dbReference>
<dbReference type="UCSC" id="uc004dfl.5">
    <molecule id="O14936-1"/>
    <property type="organism name" value="human"/>
</dbReference>
<dbReference type="AGR" id="HGNC:1497"/>
<dbReference type="CTD" id="8573"/>
<dbReference type="DisGeNET" id="8573"/>
<dbReference type="GeneCards" id="CASK"/>
<dbReference type="GeneReviews" id="CASK"/>
<dbReference type="HGNC" id="HGNC:1497">
    <property type="gene designation" value="CASK"/>
</dbReference>
<dbReference type="HPA" id="ENSG00000147044">
    <property type="expression patterns" value="Low tissue specificity"/>
</dbReference>
<dbReference type="MalaCards" id="CASK"/>
<dbReference type="MIM" id="300172">
    <property type="type" value="gene"/>
</dbReference>
<dbReference type="MIM" id="300422">
    <property type="type" value="phenotype"/>
</dbReference>
<dbReference type="MIM" id="300749">
    <property type="type" value="phenotype"/>
</dbReference>
<dbReference type="neXtProt" id="NX_O14936"/>
<dbReference type="OpenTargets" id="ENSG00000147044"/>
<dbReference type="Orphanet" id="1934">
    <property type="disease" value="Early infantile developmental and epileptic encephalopathy"/>
</dbReference>
<dbReference type="Orphanet" id="163937">
    <property type="disease" value="X-linked intellectual disability, Najm type"/>
</dbReference>
<dbReference type="Orphanet" id="777">
    <property type="disease" value="X-linked non-syndromic intellectual disability"/>
</dbReference>
<dbReference type="PharmGKB" id="PA26081"/>
<dbReference type="VEuPathDB" id="HostDB:ENSG00000147044"/>
<dbReference type="eggNOG" id="KOG0033">
    <property type="taxonomic scope" value="Eukaryota"/>
</dbReference>
<dbReference type="eggNOG" id="KOG0609">
    <property type="taxonomic scope" value="Eukaryota"/>
</dbReference>
<dbReference type="GeneTree" id="ENSGT00940000155600"/>
<dbReference type="HOGENOM" id="CLU_001715_5_3_1"/>
<dbReference type="InParanoid" id="O14936"/>
<dbReference type="OrthoDB" id="65789at2759"/>
<dbReference type="PAN-GO" id="O14936">
    <property type="GO annotations" value="6 GO annotations based on evolutionary models"/>
</dbReference>
<dbReference type="PhylomeDB" id="O14936"/>
<dbReference type="TreeFam" id="TF314263"/>
<dbReference type="BRENDA" id="2.7.11.1">
    <property type="organism ID" value="2681"/>
</dbReference>
<dbReference type="BRENDA" id="2.7.4.8">
    <property type="organism ID" value="2681"/>
</dbReference>
<dbReference type="PathwayCommons" id="O14936"/>
<dbReference type="Reactome" id="R-HSA-212676">
    <property type="pathway name" value="Dopamine Neurotransmitter Release Cycle"/>
</dbReference>
<dbReference type="Reactome" id="R-HSA-3000170">
    <property type="pathway name" value="Syndecan interactions"/>
</dbReference>
<dbReference type="Reactome" id="R-HSA-373753">
    <property type="pathway name" value="Nephrin family interactions"/>
</dbReference>
<dbReference type="Reactome" id="R-HSA-6794361">
    <property type="pathway name" value="Neurexins and neuroligins"/>
</dbReference>
<dbReference type="Reactome" id="R-HSA-9609736">
    <property type="pathway name" value="Assembly and cell surface presentation of NMDA receptors"/>
</dbReference>
<dbReference type="Reactome" id="R-HSA-9662360">
    <property type="pathway name" value="Sensory processing of sound by inner hair cells of the cochlea"/>
</dbReference>
<dbReference type="Reactome" id="R-HSA-9662361">
    <property type="pathway name" value="Sensory processing of sound by outer hair cells of the cochlea"/>
</dbReference>
<dbReference type="SABIO-RK" id="O14936"/>
<dbReference type="SignaLink" id="O14936"/>
<dbReference type="SIGNOR" id="O14936"/>
<dbReference type="BioGRID-ORCS" id="8573">
    <property type="hits" value="13 hits in 804 CRISPR screens"/>
</dbReference>
<dbReference type="CD-CODE" id="FB4E32DD">
    <property type="entry name" value="Presynaptic clusters and postsynaptic densities"/>
</dbReference>
<dbReference type="ChiTaRS" id="CASK">
    <property type="organism name" value="human"/>
</dbReference>
<dbReference type="EvolutionaryTrace" id="O14936"/>
<dbReference type="GeneWiki" id="CASK"/>
<dbReference type="GenomeRNAi" id="8573"/>
<dbReference type="Pharos" id="O14936">
    <property type="development level" value="Tchem"/>
</dbReference>
<dbReference type="PRO" id="PR:O14936"/>
<dbReference type="Proteomes" id="UP000005640">
    <property type="component" value="Chromosome X"/>
</dbReference>
<dbReference type="RNAct" id="O14936">
    <property type="molecule type" value="protein"/>
</dbReference>
<dbReference type="Bgee" id="ENSG00000147044">
    <property type="expression patterns" value="Expressed in buccal mucosa cell and 211 other cell types or tissues"/>
</dbReference>
<dbReference type="ExpressionAtlas" id="O14936">
    <property type="expression patterns" value="baseline and differential"/>
</dbReference>
<dbReference type="GO" id="GO:0015629">
    <property type="term" value="C:actin cytoskeleton"/>
    <property type="evidence" value="ECO:0000304"/>
    <property type="project" value="ProtInc"/>
</dbReference>
<dbReference type="GO" id="GO:0005604">
    <property type="term" value="C:basement membrane"/>
    <property type="evidence" value="ECO:0000314"/>
    <property type="project" value="CACAO"/>
</dbReference>
<dbReference type="GO" id="GO:0016323">
    <property type="term" value="C:basolateral plasma membrane"/>
    <property type="evidence" value="ECO:0000318"/>
    <property type="project" value="GO_Central"/>
</dbReference>
<dbReference type="GO" id="GO:0005911">
    <property type="term" value="C:cell-cell junction"/>
    <property type="evidence" value="ECO:0000314"/>
    <property type="project" value="BHF-UCL"/>
</dbReference>
<dbReference type="GO" id="GO:0060170">
    <property type="term" value="C:ciliary membrane"/>
    <property type="evidence" value="ECO:0000250"/>
    <property type="project" value="BHF-UCL"/>
</dbReference>
<dbReference type="GO" id="GO:0005737">
    <property type="term" value="C:cytoplasm"/>
    <property type="evidence" value="ECO:0000314"/>
    <property type="project" value="BHF-UCL"/>
</dbReference>
<dbReference type="GO" id="GO:0005829">
    <property type="term" value="C:cytosol"/>
    <property type="evidence" value="ECO:0000304"/>
    <property type="project" value="Reactome"/>
</dbReference>
<dbReference type="GO" id="GO:0005925">
    <property type="term" value="C:focal adhesion"/>
    <property type="evidence" value="ECO:0007005"/>
    <property type="project" value="UniProtKB"/>
</dbReference>
<dbReference type="GO" id="GO:0005652">
    <property type="term" value="C:nuclear lamina"/>
    <property type="evidence" value="ECO:0000314"/>
    <property type="project" value="BHF-UCL"/>
</dbReference>
<dbReference type="GO" id="GO:0016363">
    <property type="term" value="C:nuclear matrix"/>
    <property type="evidence" value="ECO:0000314"/>
    <property type="project" value="BHF-UCL"/>
</dbReference>
<dbReference type="GO" id="GO:0005730">
    <property type="term" value="C:nucleolus"/>
    <property type="evidence" value="ECO:0000314"/>
    <property type="project" value="BHF-UCL"/>
</dbReference>
<dbReference type="GO" id="GO:0005886">
    <property type="term" value="C:plasma membrane"/>
    <property type="evidence" value="ECO:0000318"/>
    <property type="project" value="GO_Central"/>
</dbReference>
<dbReference type="GO" id="GO:0042734">
    <property type="term" value="C:presynaptic membrane"/>
    <property type="evidence" value="ECO:0000250"/>
    <property type="project" value="BHF-UCL"/>
</dbReference>
<dbReference type="GO" id="GO:0098685">
    <property type="term" value="C:Schaffer collateral - CA1 synapse"/>
    <property type="evidence" value="ECO:0007669"/>
    <property type="project" value="Ensembl"/>
</dbReference>
<dbReference type="GO" id="GO:0031982">
    <property type="term" value="C:vesicle"/>
    <property type="evidence" value="ECO:0007669"/>
    <property type="project" value="Ensembl"/>
</dbReference>
<dbReference type="GO" id="GO:0005524">
    <property type="term" value="F:ATP binding"/>
    <property type="evidence" value="ECO:0007669"/>
    <property type="project" value="UniProtKB-KW"/>
</dbReference>
<dbReference type="GO" id="GO:0005516">
    <property type="term" value="F:calmodulin binding"/>
    <property type="evidence" value="ECO:0007669"/>
    <property type="project" value="UniProtKB-KW"/>
</dbReference>
<dbReference type="GO" id="GO:0004385">
    <property type="term" value="F:guanylate kinase activity"/>
    <property type="evidence" value="ECO:0000304"/>
    <property type="project" value="ProtInc"/>
</dbReference>
<dbReference type="GO" id="GO:0042043">
    <property type="term" value="F:neurexin family protein binding"/>
    <property type="evidence" value="ECO:0007669"/>
    <property type="project" value="Ensembl"/>
</dbReference>
<dbReference type="GO" id="GO:0106310">
    <property type="term" value="F:protein serine kinase activity"/>
    <property type="evidence" value="ECO:0007669"/>
    <property type="project" value="RHEA"/>
</dbReference>
<dbReference type="GO" id="GO:0004674">
    <property type="term" value="F:protein serine/threonine kinase activity"/>
    <property type="evidence" value="ECO:0000314"/>
    <property type="project" value="FlyBase"/>
</dbReference>
<dbReference type="GO" id="GO:0005102">
    <property type="term" value="F:signaling receptor binding"/>
    <property type="evidence" value="ECO:0000318"/>
    <property type="project" value="GO_Central"/>
</dbReference>
<dbReference type="GO" id="GO:0070509">
    <property type="term" value="P:calcium ion import"/>
    <property type="evidence" value="ECO:0007669"/>
    <property type="project" value="Ensembl"/>
</dbReference>
<dbReference type="GO" id="GO:0007155">
    <property type="term" value="P:cell adhesion"/>
    <property type="evidence" value="ECO:0000304"/>
    <property type="project" value="ProtInc"/>
</dbReference>
<dbReference type="GO" id="GO:0051649">
    <property type="term" value="P:establishment of localization in cell"/>
    <property type="evidence" value="ECO:0007669"/>
    <property type="project" value="Ensembl"/>
</dbReference>
<dbReference type="GO" id="GO:0001953">
    <property type="term" value="P:negative regulation of cell-matrix adhesion"/>
    <property type="evidence" value="ECO:0000315"/>
    <property type="project" value="BHF-UCL"/>
</dbReference>
<dbReference type="GO" id="GO:0090288">
    <property type="term" value="P:negative regulation of cellular response to growth factor stimulus"/>
    <property type="evidence" value="ECO:0000315"/>
    <property type="project" value="BHF-UCL"/>
</dbReference>
<dbReference type="GO" id="GO:0010839">
    <property type="term" value="P:negative regulation of keratinocyte proliferation"/>
    <property type="evidence" value="ECO:0000314"/>
    <property type="project" value="CACAO"/>
</dbReference>
<dbReference type="GO" id="GO:0061045">
    <property type="term" value="P:negative regulation of wound healing"/>
    <property type="evidence" value="ECO:0000315"/>
    <property type="project" value="BHF-UCL"/>
</dbReference>
<dbReference type="GO" id="GO:0090280">
    <property type="term" value="P:positive regulation of calcium ion import"/>
    <property type="evidence" value="ECO:0007669"/>
    <property type="project" value="Ensembl"/>
</dbReference>
<dbReference type="GO" id="GO:0045944">
    <property type="term" value="P:positive regulation of transcription by RNA polymerase II"/>
    <property type="evidence" value="ECO:0007669"/>
    <property type="project" value="Ensembl"/>
</dbReference>
<dbReference type="GO" id="GO:0008104">
    <property type="term" value="P:protein localization"/>
    <property type="evidence" value="ECO:0000318"/>
    <property type="project" value="GO_Central"/>
</dbReference>
<dbReference type="GO" id="GO:0046928">
    <property type="term" value="P:regulation of neurotransmitter secretion"/>
    <property type="evidence" value="ECO:0000318"/>
    <property type="project" value="GO_Central"/>
</dbReference>
<dbReference type="GO" id="GO:2000300">
    <property type="term" value="P:regulation of synaptic vesicle exocytosis"/>
    <property type="evidence" value="ECO:0007669"/>
    <property type="project" value="Ensembl"/>
</dbReference>
<dbReference type="CDD" id="cd00071">
    <property type="entry name" value="GMPK"/>
    <property type="match status" value="1"/>
</dbReference>
<dbReference type="CDD" id="cd10831">
    <property type="entry name" value="PDZ_CASK-like"/>
    <property type="match status" value="1"/>
</dbReference>
<dbReference type="CDD" id="cd12081">
    <property type="entry name" value="SH3_CASK"/>
    <property type="match status" value="1"/>
</dbReference>
<dbReference type="CDD" id="cd14094">
    <property type="entry name" value="STKc_CASK"/>
    <property type="match status" value="1"/>
</dbReference>
<dbReference type="DisProt" id="DP01438"/>
<dbReference type="FunFam" id="3.40.50.300:FF:000146">
    <property type="entry name" value="MAGUK p55 subfamily member 6 isoform X1"/>
    <property type="match status" value="1"/>
</dbReference>
<dbReference type="FunFam" id="3.30.200.20:FF:000051">
    <property type="entry name" value="Peripheral plasma membrane protein CASK isoform B"/>
    <property type="match status" value="1"/>
</dbReference>
<dbReference type="FunFam" id="2.30.30.40:FF:000080">
    <property type="entry name" value="Peripheral plasma membrane protein CASK isoform X2"/>
    <property type="match status" value="1"/>
</dbReference>
<dbReference type="FunFam" id="1.10.510.10:FF:000062">
    <property type="entry name" value="peripheral plasma membrane protein CASK isoform X2"/>
    <property type="match status" value="1"/>
</dbReference>
<dbReference type="FunFam" id="2.30.42.10:FF:000016">
    <property type="entry name" value="peripheral plasma membrane protein CASK isoform X2"/>
    <property type="match status" value="1"/>
</dbReference>
<dbReference type="FunFam" id="3.30.63.10:FF:000004">
    <property type="entry name" value="peripheral plasma membrane protein CASK isoform X2"/>
    <property type="match status" value="1"/>
</dbReference>
<dbReference type="Gene3D" id="2.30.42.10">
    <property type="match status" value="1"/>
</dbReference>
<dbReference type="Gene3D" id="6.10.140.620">
    <property type="match status" value="1"/>
</dbReference>
<dbReference type="Gene3D" id="3.30.63.10">
    <property type="entry name" value="Guanylate Kinase phosphate binding domain"/>
    <property type="match status" value="1"/>
</dbReference>
<dbReference type="Gene3D" id="1.10.287.650">
    <property type="entry name" value="L27 domain"/>
    <property type="match status" value="2"/>
</dbReference>
<dbReference type="Gene3D" id="3.40.50.300">
    <property type="entry name" value="P-loop containing nucleotide triphosphate hydrolases"/>
    <property type="match status" value="1"/>
</dbReference>
<dbReference type="Gene3D" id="3.30.200.20">
    <property type="entry name" value="Phosphorylase Kinase, domain 1"/>
    <property type="match status" value="1"/>
</dbReference>
<dbReference type="Gene3D" id="2.30.30.40">
    <property type="entry name" value="SH3 Domains"/>
    <property type="match status" value="1"/>
</dbReference>
<dbReference type="Gene3D" id="1.10.510.10">
    <property type="entry name" value="Transferase(Phosphotransferase) domain 1"/>
    <property type="match status" value="1"/>
</dbReference>
<dbReference type="InterPro" id="IPR035473">
    <property type="entry name" value="CASK_SH3"/>
</dbReference>
<dbReference type="InterPro" id="IPR008145">
    <property type="entry name" value="GK/Ca_channel_bsu"/>
</dbReference>
<dbReference type="InterPro" id="IPR008144">
    <property type="entry name" value="Guanylate_kin-like_dom"/>
</dbReference>
<dbReference type="InterPro" id="IPR020590">
    <property type="entry name" value="Guanylate_kinase_CS"/>
</dbReference>
<dbReference type="InterPro" id="IPR011009">
    <property type="entry name" value="Kinase-like_dom_sf"/>
</dbReference>
<dbReference type="InterPro" id="IPR014775">
    <property type="entry name" value="L27_C"/>
</dbReference>
<dbReference type="InterPro" id="IPR004172">
    <property type="entry name" value="L27_dom"/>
</dbReference>
<dbReference type="InterPro" id="IPR036892">
    <property type="entry name" value="L27_dom_sf"/>
</dbReference>
<dbReference type="InterPro" id="IPR050716">
    <property type="entry name" value="MAGUK"/>
</dbReference>
<dbReference type="InterPro" id="IPR027417">
    <property type="entry name" value="P-loop_NTPase"/>
</dbReference>
<dbReference type="InterPro" id="IPR001478">
    <property type="entry name" value="PDZ"/>
</dbReference>
<dbReference type="InterPro" id="IPR036034">
    <property type="entry name" value="PDZ_sf"/>
</dbReference>
<dbReference type="InterPro" id="IPR000719">
    <property type="entry name" value="Prot_kinase_dom"/>
</dbReference>
<dbReference type="InterPro" id="IPR036028">
    <property type="entry name" value="SH3-like_dom_sf"/>
</dbReference>
<dbReference type="InterPro" id="IPR001452">
    <property type="entry name" value="SH3_domain"/>
</dbReference>
<dbReference type="PANTHER" id="PTHR23122">
    <property type="entry name" value="MEMBRANE-ASSOCIATED GUANYLATE KINASE MAGUK"/>
    <property type="match status" value="1"/>
</dbReference>
<dbReference type="Pfam" id="PF00625">
    <property type="entry name" value="Guanylate_kin"/>
    <property type="match status" value="1"/>
</dbReference>
<dbReference type="Pfam" id="PF02828">
    <property type="entry name" value="L27"/>
    <property type="match status" value="2"/>
</dbReference>
<dbReference type="Pfam" id="PF00595">
    <property type="entry name" value="PDZ"/>
    <property type="match status" value="1"/>
</dbReference>
<dbReference type="Pfam" id="PF00069">
    <property type="entry name" value="Pkinase"/>
    <property type="match status" value="1"/>
</dbReference>
<dbReference type="Pfam" id="PF07653">
    <property type="entry name" value="SH3_2"/>
    <property type="match status" value="1"/>
</dbReference>
<dbReference type="SMART" id="SM00072">
    <property type="entry name" value="GuKc"/>
    <property type="match status" value="1"/>
</dbReference>
<dbReference type="SMART" id="SM00569">
    <property type="entry name" value="L27"/>
    <property type="match status" value="2"/>
</dbReference>
<dbReference type="SMART" id="SM00228">
    <property type="entry name" value="PDZ"/>
    <property type="match status" value="1"/>
</dbReference>
<dbReference type="SMART" id="SM00326">
    <property type="entry name" value="SH3"/>
    <property type="match status" value="1"/>
</dbReference>
<dbReference type="SUPFAM" id="SSF101288">
    <property type="entry name" value="L27 domain"/>
    <property type="match status" value="2"/>
</dbReference>
<dbReference type="SUPFAM" id="SSF52540">
    <property type="entry name" value="P-loop containing nucleoside triphosphate hydrolases"/>
    <property type="match status" value="1"/>
</dbReference>
<dbReference type="SUPFAM" id="SSF50156">
    <property type="entry name" value="PDZ domain-like"/>
    <property type="match status" value="1"/>
</dbReference>
<dbReference type="SUPFAM" id="SSF56112">
    <property type="entry name" value="Protein kinase-like (PK-like)"/>
    <property type="match status" value="1"/>
</dbReference>
<dbReference type="SUPFAM" id="SSF50044">
    <property type="entry name" value="SH3-domain"/>
    <property type="match status" value="1"/>
</dbReference>
<dbReference type="PROSITE" id="PS00856">
    <property type="entry name" value="GUANYLATE_KINASE_1"/>
    <property type="match status" value="1"/>
</dbReference>
<dbReference type="PROSITE" id="PS50052">
    <property type="entry name" value="GUANYLATE_KINASE_2"/>
    <property type="match status" value="1"/>
</dbReference>
<dbReference type="PROSITE" id="PS51022">
    <property type="entry name" value="L27"/>
    <property type="match status" value="2"/>
</dbReference>
<dbReference type="PROSITE" id="PS50106">
    <property type="entry name" value="PDZ"/>
    <property type="match status" value="1"/>
</dbReference>
<dbReference type="PROSITE" id="PS50011">
    <property type="entry name" value="PROTEIN_KINASE_DOM"/>
    <property type="match status" value="1"/>
</dbReference>
<dbReference type="PROSITE" id="PS50002">
    <property type="entry name" value="SH3"/>
    <property type="match status" value="1"/>
</dbReference>
<protein>
    <recommendedName>
        <fullName evidence="26">Peripheral plasma membrane protein CASK</fullName>
        <shortName>hCASK</shortName>
        <ecNumber evidence="12">2.7.11.1</ecNumber>
    </recommendedName>
    <alternativeName>
        <fullName>Calcium/calmodulin-dependent serine protein kinase</fullName>
    </alternativeName>
    <alternativeName>
        <fullName>Protein lin-2 homolog</fullName>
    </alternativeName>
</protein>
<keyword id="KW-0002">3D-structure</keyword>
<keyword id="KW-0025">Alternative splicing</keyword>
<keyword id="KW-0067">ATP-binding</keyword>
<keyword id="KW-0112">Calmodulin-binding</keyword>
<keyword id="KW-1003">Cell membrane</keyword>
<keyword id="KW-0963">Cytoplasm</keyword>
<keyword id="KW-0225">Disease variant</keyword>
<keyword id="KW-0991">Intellectual disability</keyword>
<keyword id="KW-0418">Kinase</keyword>
<keyword id="KW-0472">Membrane</keyword>
<keyword id="KW-0547">Nucleotide-binding</keyword>
<keyword id="KW-0539">Nucleus</keyword>
<keyword id="KW-0597">Phosphoprotein</keyword>
<keyword id="KW-1267">Proteomics identification</keyword>
<keyword id="KW-1185">Reference proteome</keyword>
<keyword id="KW-0677">Repeat</keyword>
<keyword id="KW-0723">Serine/threonine-protein kinase</keyword>
<keyword id="KW-0728">SH3 domain</keyword>
<keyword id="KW-0808">Transferase</keyword>
<proteinExistence type="evidence at protein level"/>
<accession>O14936</accession>
<accession>A6NES1</accession>
<accession>B7ZKY0</accession>
<accession>O43215</accession>
<accession>Q17RI4</accession>
<accession>Q59HA0</accession>
<accession>Q5VT16</accession>
<accession>Q5VT17</accession>
<accession>Q5VT18</accession>
<accession>Q5VT19</accession>
<accession>Q66T42</accession>
<accession>Q9BYH6</accession>
<accession>Q9NYB2</accession>
<accession>Q9NYB3</accession>
<evidence type="ECO:0000250" key="1"/>
<evidence type="ECO:0000250" key="2">
    <source>
        <dbReference type="UniProtKB" id="O70589"/>
    </source>
</evidence>
<evidence type="ECO:0000250" key="3">
    <source>
        <dbReference type="UniProtKB" id="Q62915"/>
    </source>
</evidence>
<evidence type="ECO:0000255" key="4">
    <source>
        <dbReference type="PROSITE-ProRule" id="PRU00100"/>
    </source>
</evidence>
<evidence type="ECO:0000255" key="5">
    <source>
        <dbReference type="PROSITE-ProRule" id="PRU00143"/>
    </source>
</evidence>
<evidence type="ECO:0000255" key="6">
    <source>
        <dbReference type="PROSITE-ProRule" id="PRU00159"/>
    </source>
</evidence>
<evidence type="ECO:0000255" key="7">
    <source>
        <dbReference type="PROSITE-ProRule" id="PRU00192"/>
    </source>
</evidence>
<evidence type="ECO:0000255" key="8">
    <source>
        <dbReference type="PROSITE-ProRule" id="PRU00365"/>
    </source>
</evidence>
<evidence type="ECO:0000256" key="9">
    <source>
        <dbReference type="SAM" id="MobiDB-lite"/>
    </source>
</evidence>
<evidence type="ECO:0000269" key="10">
    <source>
    </source>
</evidence>
<evidence type="ECO:0000269" key="11">
    <source>
    </source>
</evidence>
<evidence type="ECO:0000269" key="12">
    <source>
    </source>
</evidence>
<evidence type="ECO:0000269" key="13">
    <source>
    </source>
</evidence>
<evidence type="ECO:0000269" key="14">
    <source>
    </source>
</evidence>
<evidence type="ECO:0000269" key="15">
    <source>
    </source>
</evidence>
<evidence type="ECO:0000269" key="16">
    <source>
    </source>
</evidence>
<evidence type="ECO:0000269" key="17">
    <source>
    </source>
</evidence>
<evidence type="ECO:0000269" key="18">
    <source>
    </source>
</evidence>
<evidence type="ECO:0000303" key="19">
    <source>
    </source>
</evidence>
<evidence type="ECO:0000303" key="20">
    <source>
    </source>
</evidence>
<evidence type="ECO:0000303" key="21">
    <source>
    </source>
</evidence>
<evidence type="ECO:0000303" key="22">
    <source ref="2"/>
</evidence>
<evidence type="ECO:0000303" key="23">
    <source ref="3"/>
</evidence>
<evidence type="ECO:0000303" key="24">
    <source ref="4"/>
</evidence>
<evidence type="ECO:0000303" key="25">
    <source ref="7"/>
</evidence>
<evidence type="ECO:0000305" key="26"/>
<evidence type="ECO:0000312" key="27">
    <source>
        <dbReference type="HGNC" id="HGNC:1497"/>
    </source>
</evidence>
<evidence type="ECO:0007744" key="28">
    <source>
    </source>
</evidence>
<evidence type="ECO:0007744" key="29">
    <source>
    </source>
</evidence>
<evidence type="ECO:0007829" key="30">
    <source>
        <dbReference type="PDB" id="1KGD"/>
    </source>
</evidence>
<evidence type="ECO:0007829" key="31">
    <source>
        <dbReference type="PDB" id="1KWA"/>
    </source>
</evidence>
<evidence type="ECO:0007829" key="32">
    <source>
        <dbReference type="PDB" id="1ZL8"/>
    </source>
</evidence>
<evidence type="ECO:0007829" key="33">
    <source>
        <dbReference type="PDB" id="3C0G"/>
    </source>
</evidence>
<evidence type="ECO:0007829" key="34">
    <source>
        <dbReference type="PDB" id="3C0I"/>
    </source>
</evidence>
<evidence type="ECO:0007829" key="35">
    <source>
        <dbReference type="PDB" id="3MFS"/>
    </source>
</evidence>
<evidence type="ECO:0007829" key="36">
    <source>
        <dbReference type="PDB" id="3TAC"/>
    </source>
</evidence>